<keyword id="KW-0067">ATP-binding</keyword>
<keyword id="KW-0963">Cytoplasm</keyword>
<keyword id="KW-0235">DNA replication</keyword>
<keyword id="KW-0238">DNA-binding</keyword>
<keyword id="KW-0446">Lipid-binding</keyword>
<keyword id="KW-0547">Nucleotide-binding</keyword>
<keyword id="KW-1185">Reference proteome</keyword>
<accession>A5VHF3</accession>
<protein>
    <recommendedName>
        <fullName evidence="1">Chromosomal replication initiator protein DnaA</fullName>
    </recommendedName>
</protein>
<sequence length="440" mass="49943">MTELDSLWEAIQNSFRQDTTPVTFDTLIAPAKAISLSQNQLEIEVPTPVHRDFWRKNLNTQLKEFAQRELGRNIEPHYVLEGEFTYTNKKTEDDPTPSFEMDTPLNPHYNFGTFVVGEGNKMAHAAAFAVAESPGSLYNPLFIYGGVGLGKTHLMEAIGNHMLQVNPNSRVKYVTSEDFTNDYINAIRNNTTEQLREEYRNLDLLLIDDIQFLANKEGTQLEFFNTFNALHDRKKQIVMTSDRIPNEIPELQDRLVSRFRWGLTVEITPPDLETRIAILRSKVEEDHIDIGNDTLNYIAGQIDTNIRELEGALTKVQAFANLSGERITPSLASQALKGLHRVAKNEISIATIQKQVADFYNITQGDILGKKRVKQIVMPRQIAMYLSRELTDSSLPKIGNEFGGKDHTTVLHAIDKIETELKKDTDLQNDITKLKAKLRS</sequence>
<gene>
    <name evidence="1" type="primary">dnaA</name>
    <name type="ordered locus">Lreu_0001</name>
</gene>
<name>DNAA_LIMRD</name>
<feature type="chain" id="PRO_1000060014" description="Chromosomal replication initiator protein DnaA">
    <location>
        <begin position="1"/>
        <end position="440"/>
    </location>
</feature>
<feature type="region of interest" description="Domain I, interacts with DnaA modulators" evidence="1">
    <location>
        <begin position="1"/>
        <end position="72"/>
    </location>
</feature>
<feature type="region of interest" description="Domain II" evidence="1">
    <location>
        <begin position="72"/>
        <end position="103"/>
    </location>
</feature>
<feature type="region of interest" description="Domain III, AAA+ region" evidence="1">
    <location>
        <begin position="104"/>
        <end position="320"/>
    </location>
</feature>
<feature type="region of interest" description="Domain IV, binds dsDNA" evidence="1">
    <location>
        <begin position="321"/>
        <end position="440"/>
    </location>
</feature>
<feature type="binding site" evidence="1">
    <location>
        <position position="148"/>
    </location>
    <ligand>
        <name>ATP</name>
        <dbReference type="ChEBI" id="CHEBI:30616"/>
    </ligand>
</feature>
<feature type="binding site" evidence="1">
    <location>
        <position position="150"/>
    </location>
    <ligand>
        <name>ATP</name>
        <dbReference type="ChEBI" id="CHEBI:30616"/>
    </ligand>
</feature>
<feature type="binding site" evidence="1">
    <location>
        <position position="151"/>
    </location>
    <ligand>
        <name>ATP</name>
        <dbReference type="ChEBI" id="CHEBI:30616"/>
    </ligand>
</feature>
<feature type="binding site" evidence="1">
    <location>
        <position position="152"/>
    </location>
    <ligand>
        <name>ATP</name>
        <dbReference type="ChEBI" id="CHEBI:30616"/>
    </ligand>
</feature>
<proteinExistence type="inferred from homology"/>
<organism>
    <name type="scientific">Limosilactobacillus reuteri (strain DSM 20016)</name>
    <name type="common">Lactobacillus reuteri</name>
    <dbReference type="NCBI Taxonomy" id="557436"/>
    <lineage>
        <taxon>Bacteria</taxon>
        <taxon>Bacillati</taxon>
        <taxon>Bacillota</taxon>
        <taxon>Bacilli</taxon>
        <taxon>Lactobacillales</taxon>
        <taxon>Lactobacillaceae</taxon>
        <taxon>Limosilactobacillus</taxon>
    </lineage>
</organism>
<reference key="1">
    <citation type="journal article" date="2011" name="PLoS Genet.">
        <title>The evolution of host specialization in the vertebrate gut symbiont Lactobacillus reuteri.</title>
        <authorList>
            <person name="Frese S.A."/>
            <person name="Benson A.K."/>
            <person name="Tannock G.W."/>
            <person name="Loach D.M."/>
            <person name="Kim J."/>
            <person name="Zhang M."/>
            <person name="Oh P.L."/>
            <person name="Heng N.C."/>
            <person name="Patil P.B."/>
            <person name="Juge N."/>
            <person name="Mackenzie D.A."/>
            <person name="Pearson B.M."/>
            <person name="Lapidus A."/>
            <person name="Dalin E."/>
            <person name="Tice H."/>
            <person name="Goltsman E."/>
            <person name="Land M."/>
            <person name="Hauser L."/>
            <person name="Ivanova N."/>
            <person name="Kyrpides N.C."/>
            <person name="Walter J."/>
        </authorList>
    </citation>
    <scope>NUCLEOTIDE SEQUENCE [LARGE SCALE GENOMIC DNA]</scope>
    <source>
        <strain>DSM 20016</strain>
    </source>
</reference>
<evidence type="ECO:0000255" key="1">
    <source>
        <dbReference type="HAMAP-Rule" id="MF_00377"/>
    </source>
</evidence>
<dbReference type="EMBL" id="CP000705">
    <property type="protein sequence ID" value="ABQ82277.1"/>
    <property type="molecule type" value="Genomic_DNA"/>
</dbReference>
<dbReference type="RefSeq" id="WP_003669485.1">
    <property type="nucleotide sequence ID" value="NC_009513.1"/>
</dbReference>
<dbReference type="SMR" id="A5VHF3"/>
<dbReference type="STRING" id="557436.Lreu_0001"/>
<dbReference type="KEGG" id="lre:Lreu_0001"/>
<dbReference type="eggNOG" id="COG0593">
    <property type="taxonomic scope" value="Bacteria"/>
</dbReference>
<dbReference type="HOGENOM" id="CLU_026910_3_1_9"/>
<dbReference type="Proteomes" id="UP000001991">
    <property type="component" value="Chromosome"/>
</dbReference>
<dbReference type="GO" id="GO:0005737">
    <property type="term" value="C:cytoplasm"/>
    <property type="evidence" value="ECO:0007669"/>
    <property type="project" value="UniProtKB-SubCell"/>
</dbReference>
<dbReference type="GO" id="GO:0005886">
    <property type="term" value="C:plasma membrane"/>
    <property type="evidence" value="ECO:0007669"/>
    <property type="project" value="TreeGrafter"/>
</dbReference>
<dbReference type="GO" id="GO:0005524">
    <property type="term" value="F:ATP binding"/>
    <property type="evidence" value="ECO:0007669"/>
    <property type="project" value="UniProtKB-UniRule"/>
</dbReference>
<dbReference type="GO" id="GO:0016887">
    <property type="term" value="F:ATP hydrolysis activity"/>
    <property type="evidence" value="ECO:0007669"/>
    <property type="project" value="InterPro"/>
</dbReference>
<dbReference type="GO" id="GO:0003688">
    <property type="term" value="F:DNA replication origin binding"/>
    <property type="evidence" value="ECO:0007669"/>
    <property type="project" value="UniProtKB-UniRule"/>
</dbReference>
<dbReference type="GO" id="GO:0008289">
    <property type="term" value="F:lipid binding"/>
    <property type="evidence" value="ECO:0007669"/>
    <property type="project" value="UniProtKB-KW"/>
</dbReference>
<dbReference type="GO" id="GO:0006270">
    <property type="term" value="P:DNA replication initiation"/>
    <property type="evidence" value="ECO:0007669"/>
    <property type="project" value="UniProtKB-UniRule"/>
</dbReference>
<dbReference type="GO" id="GO:0006275">
    <property type="term" value="P:regulation of DNA replication"/>
    <property type="evidence" value="ECO:0007669"/>
    <property type="project" value="UniProtKB-UniRule"/>
</dbReference>
<dbReference type="CDD" id="cd00009">
    <property type="entry name" value="AAA"/>
    <property type="match status" value="1"/>
</dbReference>
<dbReference type="CDD" id="cd06571">
    <property type="entry name" value="Bac_DnaA_C"/>
    <property type="match status" value="1"/>
</dbReference>
<dbReference type="FunFam" id="1.10.1750.10:FF:000002">
    <property type="entry name" value="Chromosomal replication initiator protein DnaA"/>
    <property type="match status" value="1"/>
</dbReference>
<dbReference type="FunFam" id="3.40.50.300:FF:000668">
    <property type="entry name" value="Chromosomal replication initiator protein DnaA"/>
    <property type="match status" value="1"/>
</dbReference>
<dbReference type="Gene3D" id="1.10.1750.10">
    <property type="match status" value="1"/>
</dbReference>
<dbReference type="Gene3D" id="1.10.8.60">
    <property type="match status" value="1"/>
</dbReference>
<dbReference type="Gene3D" id="3.30.300.180">
    <property type="match status" value="1"/>
</dbReference>
<dbReference type="Gene3D" id="3.40.50.300">
    <property type="entry name" value="P-loop containing nucleotide triphosphate hydrolases"/>
    <property type="match status" value="1"/>
</dbReference>
<dbReference type="HAMAP" id="MF_00377">
    <property type="entry name" value="DnaA_bact"/>
    <property type="match status" value="1"/>
</dbReference>
<dbReference type="InterPro" id="IPR003593">
    <property type="entry name" value="AAA+_ATPase"/>
</dbReference>
<dbReference type="InterPro" id="IPR001957">
    <property type="entry name" value="Chromosome_initiator_DnaA"/>
</dbReference>
<dbReference type="InterPro" id="IPR020591">
    <property type="entry name" value="Chromosome_initiator_DnaA-like"/>
</dbReference>
<dbReference type="InterPro" id="IPR018312">
    <property type="entry name" value="Chromosome_initiator_DnaA_CS"/>
</dbReference>
<dbReference type="InterPro" id="IPR013159">
    <property type="entry name" value="DnaA_C"/>
</dbReference>
<dbReference type="InterPro" id="IPR013317">
    <property type="entry name" value="DnaA_dom"/>
</dbReference>
<dbReference type="InterPro" id="IPR024633">
    <property type="entry name" value="DnaA_N_dom"/>
</dbReference>
<dbReference type="InterPro" id="IPR038454">
    <property type="entry name" value="DnaA_N_sf"/>
</dbReference>
<dbReference type="InterPro" id="IPR027417">
    <property type="entry name" value="P-loop_NTPase"/>
</dbReference>
<dbReference type="InterPro" id="IPR010921">
    <property type="entry name" value="Trp_repressor/repl_initiator"/>
</dbReference>
<dbReference type="NCBIfam" id="TIGR00362">
    <property type="entry name" value="DnaA"/>
    <property type="match status" value="1"/>
</dbReference>
<dbReference type="PANTHER" id="PTHR30050">
    <property type="entry name" value="CHROMOSOMAL REPLICATION INITIATOR PROTEIN DNAA"/>
    <property type="match status" value="1"/>
</dbReference>
<dbReference type="PANTHER" id="PTHR30050:SF2">
    <property type="entry name" value="CHROMOSOMAL REPLICATION INITIATOR PROTEIN DNAA"/>
    <property type="match status" value="1"/>
</dbReference>
<dbReference type="Pfam" id="PF00308">
    <property type="entry name" value="Bac_DnaA"/>
    <property type="match status" value="1"/>
</dbReference>
<dbReference type="Pfam" id="PF08299">
    <property type="entry name" value="Bac_DnaA_C"/>
    <property type="match status" value="1"/>
</dbReference>
<dbReference type="Pfam" id="PF11638">
    <property type="entry name" value="DnaA_N"/>
    <property type="match status" value="1"/>
</dbReference>
<dbReference type="PRINTS" id="PR00051">
    <property type="entry name" value="DNAA"/>
</dbReference>
<dbReference type="SMART" id="SM00382">
    <property type="entry name" value="AAA"/>
    <property type="match status" value="1"/>
</dbReference>
<dbReference type="SMART" id="SM00760">
    <property type="entry name" value="Bac_DnaA_C"/>
    <property type="match status" value="1"/>
</dbReference>
<dbReference type="SUPFAM" id="SSF52540">
    <property type="entry name" value="P-loop containing nucleoside triphosphate hydrolases"/>
    <property type="match status" value="1"/>
</dbReference>
<dbReference type="SUPFAM" id="SSF48295">
    <property type="entry name" value="TrpR-like"/>
    <property type="match status" value="1"/>
</dbReference>
<dbReference type="PROSITE" id="PS01008">
    <property type="entry name" value="DNAA"/>
    <property type="match status" value="1"/>
</dbReference>
<comment type="function">
    <text evidence="1">Plays an essential role in the initiation and regulation of chromosomal replication. ATP-DnaA binds to the origin of replication (oriC) to initiate formation of the DNA replication initiation complex once per cell cycle. Binds the DnaA box (a 9 base pair repeat at the origin) and separates the double-stranded (ds)DNA. Forms a right-handed helical filament on oriC DNA; dsDNA binds to the exterior of the filament while single-stranded (ss)DNA is stabiized in the filament's interior. The ATP-DnaA-oriC complex binds and stabilizes one strand of the AT-rich DNA unwinding element (DUE), permitting loading of DNA polymerase. After initiation quickly degrades to an ADP-DnaA complex that is not apt for DNA replication. Binds acidic phospholipids.</text>
</comment>
<comment type="subunit">
    <text evidence="1">Oligomerizes as a right-handed, spiral filament on DNA at oriC.</text>
</comment>
<comment type="subcellular location">
    <subcellularLocation>
        <location evidence="1">Cytoplasm</location>
    </subcellularLocation>
</comment>
<comment type="domain">
    <text evidence="1">Domain I is involved in oligomerization and binding regulators, domain II is flexibile and of varying length in different bacteria, domain III forms the AAA+ region, while domain IV binds dsDNA.</text>
</comment>
<comment type="similarity">
    <text evidence="1">Belongs to the DnaA family.</text>
</comment>